<accession>A4SVE6</accession>
<evidence type="ECO:0000255" key="1">
    <source>
        <dbReference type="HAMAP-Rule" id="MF_00375"/>
    </source>
</evidence>
<keyword id="KW-0963">Cytoplasm</keyword>
<keyword id="KW-0413">Isomerase</keyword>
<keyword id="KW-0627">Porphyrin biosynthesis</keyword>
<keyword id="KW-0663">Pyridoxal phosphate</keyword>
<keyword id="KW-1185">Reference proteome</keyword>
<gene>
    <name evidence="1" type="primary">hemL</name>
    <name type="ordered locus">Pnuc_0239</name>
</gene>
<name>GSA_POLAQ</name>
<protein>
    <recommendedName>
        <fullName evidence="1">Glutamate-1-semialdehyde 2,1-aminomutase</fullName>
        <shortName evidence="1">GSA</shortName>
        <ecNumber evidence="1">5.4.3.8</ecNumber>
    </recommendedName>
    <alternativeName>
        <fullName evidence="1">Glutamate-1-semialdehyde aminotransferase</fullName>
        <shortName evidence="1">GSA-AT</shortName>
    </alternativeName>
</protein>
<dbReference type="EC" id="5.4.3.8" evidence="1"/>
<dbReference type="EMBL" id="CP000655">
    <property type="protein sequence ID" value="ABP33460.1"/>
    <property type="molecule type" value="Genomic_DNA"/>
</dbReference>
<dbReference type="RefSeq" id="WP_011902085.1">
    <property type="nucleotide sequence ID" value="NC_009379.1"/>
</dbReference>
<dbReference type="SMR" id="A4SVE6"/>
<dbReference type="GeneID" id="31480589"/>
<dbReference type="KEGG" id="pnu:Pnuc_0239"/>
<dbReference type="eggNOG" id="COG0001">
    <property type="taxonomic scope" value="Bacteria"/>
</dbReference>
<dbReference type="HOGENOM" id="CLU_016922_1_5_4"/>
<dbReference type="UniPathway" id="UPA00251">
    <property type="reaction ID" value="UER00317"/>
</dbReference>
<dbReference type="Proteomes" id="UP000000231">
    <property type="component" value="Chromosome"/>
</dbReference>
<dbReference type="GO" id="GO:0005737">
    <property type="term" value="C:cytoplasm"/>
    <property type="evidence" value="ECO:0007669"/>
    <property type="project" value="UniProtKB-SubCell"/>
</dbReference>
<dbReference type="GO" id="GO:0042286">
    <property type="term" value="F:glutamate-1-semialdehyde 2,1-aminomutase activity"/>
    <property type="evidence" value="ECO:0007669"/>
    <property type="project" value="UniProtKB-UniRule"/>
</dbReference>
<dbReference type="GO" id="GO:0030170">
    <property type="term" value="F:pyridoxal phosphate binding"/>
    <property type="evidence" value="ECO:0007669"/>
    <property type="project" value="InterPro"/>
</dbReference>
<dbReference type="GO" id="GO:0008483">
    <property type="term" value="F:transaminase activity"/>
    <property type="evidence" value="ECO:0007669"/>
    <property type="project" value="InterPro"/>
</dbReference>
<dbReference type="GO" id="GO:0006782">
    <property type="term" value="P:protoporphyrinogen IX biosynthetic process"/>
    <property type="evidence" value="ECO:0007669"/>
    <property type="project" value="UniProtKB-UniRule"/>
</dbReference>
<dbReference type="CDD" id="cd00610">
    <property type="entry name" value="OAT_like"/>
    <property type="match status" value="1"/>
</dbReference>
<dbReference type="FunFam" id="3.40.640.10:FF:000021">
    <property type="entry name" value="Glutamate-1-semialdehyde 2,1-aminomutase"/>
    <property type="match status" value="1"/>
</dbReference>
<dbReference type="Gene3D" id="3.90.1150.10">
    <property type="entry name" value="Aspartate Aminotransferase, domain 1"/>
    <property type="match status" value="1"/>
</dbReference>
<dbReference type="Gene3D" id="3.40.640.10">
    <property type="entry name" value="Type I PLP-dependent aspartate aminotransferase-like (Major domain)"/>
    <property type="match status" value="1"/>
</dbReference>
<dbReference type="HAMAP" id="MF_00375">
    <property type="entry name" value="HemL_aminotrans_3"/>
    <property type="match status" value="1"/>
</dbReference>
<dbReference type="InterPro" id="IPR004639">
    <property type="entry name" value="4pyrrol_synth_GluAld_NH2Trfase"/>
</dbReference>
<dbReference type="InterPro" id="IPR005814">
    <property type="entry name" value="Aminotrans_3"/>
</dbReference>
<dbReference type="InterPro" id="IPR049704">
    <property type="entry name" value="Aminotrans_3_PPA_site"/>
</dbReference>
<dbReference type="InterPro" id="IPR015424">
    <property type="entry name" value="PyrdxlP-dep_Trfase"/>
</dbReference>
<dbReference type="InterPro" id="IPR015421">
    <property type="entry name" value="PyrdxlP-dep_Trfase_major"/>
</dbReference>
<dbReference type="InterPro" id="IPR015422">
    <property type="entry name" value="PyrdxlP-dep_Trfase_small"/>
</dbReference>
<dbReference type="NCBIfam" id="TIGR00713">
    <property type="entry name" value="hemL"/>
    <property type="match status" value="1"/>
</dbReference>
<dbReference type="NCBIfam" id="NF000818">
    <property type="entry name" value="PRK00062.1"/>
    <property type="match status" value="1"/>
</dbReference>
<dbReference type="PANTHER" id="PTHR43713">
    <property type="entry name" value="GLUTAMATE-1-SEMIALDEHYDE 2,1-AMINOMUTASE"/>
    <property type="match status" value="1"/>
</dbReference>
<dbReference type="PANTHER" id="PTHR43713:SF3">
    <property type="entry name" value="GLUTAMATE-1-SEMIALDEHYDE 2,1-AMINOMUTASE 1, CHLOROPLASTIC-RELATED"/>
    <property type="match status" value="1"/>
</dbReference>
<dbReference type="Pfam" id="PF00202">
    <property type="entry name" value="Aminotran_3"/>
    <property type="match status" value="1"/>
</dbReference>
<dbReference type="SUPFAM" id="SSF53383">
    <property type="entry name" value="PLP-dependent transferases"/>
    <property type="match status" value="1"/>
</dbReference>
<dbReference type="PROSITE" id="PS00600">
    <property type="entry name" value="AA_TRANSFER_CLASS_3"/>
    <property type="match status" value="1"/>
</dbReference>
<organism>
    <name type="scientific">Polynucleobacter asymbioticus (strain DSM 18221 / CIP 109841 / QLW-P1DMWA-1)</name>
    <name type="common">Polynucleobacter necessarius subsp. asymbioticus</name>
    <dbReference type="NCBI Taxonomy" id="312153"/>
    <lineage>
        <taxon>Bacteria</taxon>
        <taxon>Pseudomonadati</taxon>
        <taxon>Pseudomonadota</taxon>
        <taxon>Betaproteobacteria</taxon>
        <taxon>Burkholderiales</taxon>
        <taxon>Burkholderiaceae</taxon>
        <taxon>Polynucleobacter</taxon>
    </lineage>
</organism>
<sequence length="434" mass="46486">MTKRDQNEVLFERAQKTIPGGVNSPVRAFRQVGGTPRFISKAKGPYFWDAENKRYIDLIMSWGPMIAGHANPEVVEAVQKAAETSFSYGAPTEGEIELAERICALVPSIEQVRMVSSGTEATMSALRLARGYTNRDLIIKFEGCYHGHADSLLVKAGSGLLTFADSTQNAPSSGGVPQDLVKHTLVLPYNDVEAIEAVFKKQGNEIAAVILEPIAGNMNLIKPSAEFLKALRDLTSQYGSVLIYDEVMTGFRVALGGAQSLQGIVPDLTCLGKVMGGGMPMAAFGGKKEIMSKLAPLGNVYQAGTLSGNPVAVAAGLKTLEIVSRAGFYECLSAQTEKLMLGLKQGADKSGIPFAVDSVGGMFGFYFADAVPSTYEAVTKTNIDAFKKFFHLMLDEGVYLAPSAYEAGFTSIAHDDAVLQVIIDAAEKSFPQLR</sequence>
<feature type="chain" id="PRO_0000382358" description="Glutamate-1-semialdehyde 2,1-aminomutase">
    <location>
        <begin position="1"/>
        <end position="434"/>
    </location>
</feature>
<feature type="modified residue" description="N6-(pyridoxal phosphate)lysine" evidence="1">
    <location>
        <position position="273"/>
    </location>
</feature>
<comment type="catalytic activity">
    <reaction evidence="1">
        <text>(S)-4-amino-5-oxopentanoate = 5-aminolevulinate</text>
        <dbReference type="Rhea" id="RHEA:14265"/>
        <dbReference type="ChEBI" id="CHEBI:57501"/>
        <dbReference type="ChEBI" id="CHEBI:356416"/>
        <dbReference type="EC" id="5.4.3.8"/>
    </reaction>
</comment>
<comment type="cofactor">
    <cofactor evidence="1">
        <name>pyridoxal 5'-phosphate</name>
        <dbReference type="ChEBI" id="CHEBI:597326"/>
    </cofactor>
</comment>
<comment type="pathway">
    <text evidence="1">Porphyrin-containing compound metabolism; protoporphyrin-IX biosynthesis; 5-aminolevulinate from L-glutamyl-tRNA(Glu): step 2/2.</text>
</comment>
<comment type="subunit">
    <text evidence="1">Homodimer.</text>
</comment>
<comment type="subcellular location">
    <subcellularLocation>
        <location evidence="1">Cytoplasm</location>
    </subcellularLocation>
</comment>
<comment type="similarity">
    <text evidence="1">Belongs to the class-III pyridoxal-phosphate-dependent aminotransferase family. HemL subfamily.</text>
</comment>
<reference key="1">
    <citation type="journal article" date="2012" name="Stand. Genomic Sci.">
        <title>Complete genome sequence of Polynucleobacter necessarius subsp. asymbioticus type strain (QLW-P1DMWA-1(T)).</title>
        <authorList>
            <person name="Meincke L."/>
            <person name="Copeland A."/>
            <person name="Lapidus A."/>
            <person name="Lucas S."/>
            <person name="Berry K.W."/>
            <person name="Del Rio T.G."/>
            <person name="Hammon N."/>
            <person name="Dalin E."/>
            <person name="Tice H."/>
            <person name="Pitluck S."/>
            <person name="Richardson P."/>
            <person name="Bruce D."/>
            <person name="Goodwin L."/>
            <person name="Han C."/>
            <person name="Tapia R."/>
            <person name="Detter J.C."/>
            <person name="Schmutz J."/>
            <person name="Brettin T."/>
            <person name="Larimer F."/>
            <person name="Land M."/>
            <person name="Hauser L."/>
            <person name="Kyrpides N.C."/>
            <person name="Ivanova N."/>
            <person name="Goker M."/>
            <person name="Woyke T."/>
            <person name="Wu Q.L."/>
            <person name="Pockl M."/>
            <person name="Hahn M.W."/>
            <person name="Klenk H.P."/>
        </authorList>
    </citation>
    <scope>NUCLEOTIDE SEQUENCE [LARGE SCALE GENOMIC DNA]</scope>
    <source>
        <strain>DSM 18221 / CIP 109841 / QLW-P1DMWA-1</strain>
    </source>
</reference>
<proteinExistence type="inferred from homology"/>